<sequence length="190" mass="20820">MLLSDRDLRAEITAGRLGIEPFDDALVQPSSIDVRLDCMFRVFNNTRYTHIDPAKQQDELTSLVEPQDGEPFVLHPGEFVLGSTLELITLPDDLAGRLEGKSSLGRLGLLTHSTAGFIDPGFSGHITLELSNVANLPITLWPGMKIGQLCILRLTSPAEHPYGSTRVGSKYQGQRGPTPSRSYQNFITST</sequence>
<feature type="chain" id="PRO_1000009756" description="dCTP deaminase, dUMP-forming">
    <location>
        <begin position="1"/>
        <end position="190"/>
    </location>
</feature>
<feature type="region of interest" description="Disordered" evidence="2">
    <location>
        <begin position="163"/>
        <end position="190"/>
    </location>
</feature>
<feature type="compositionally biased region" description="Polar residues" evidence="2">
    <location>
        <begin position="171"/>
        <end position="190"/>
    </location>
</feature>
<feature type="active site" description="Proton donor/acceptor" evidence="1">
    <location>
        <position position="129"/>
    </location>
</feature>
<feature type="binding site" evidence="1">
    <location>
        <begin position="101"/>
        <end position="106"/>
    </location>
    <ligand>
        <name>dCTP</name>
        <dbReference type="ChEBI" id="CHEBI:61481"/>
    </ligand>
</feature>
<feature type="binding site" evidence="1">
    <location>
        <position position="119"/>
    </location>
    <ligand>
        <name>dCTP</name>
        <dbReference type="ChEBI" id="CHEBI:61481"/>
    </ligand>
</feature>
<feature type="binding site" evidence="1">
    <location>
        <begin position="127"/>
        <end position="129"/>
    </location>
    <ligand>
        <name>dCTP</name>
        <dbReference type="ChEBI" id="CHEBI:61481"/>
    </ligand>
</feature>
<feature type="binding site" evidence="1">
    <location>
        <position position="148"/>
    </location>
    <ligand>
        <name>dCTP</name>
        <dbReference type="ChEBI" id="CHEBI:61481"/>
    </ligand>
</feature>
<feature type="binding site" evidence="1">
    <location>
        <position position="162"/>
    </location>
    <ligand>
        <name>dCTP</name>
        <dbReference type="ChEBI" id="CHEBI:61481"/>
    </ligand>
</feature>
<feature type="binding site" evidence="1">
    <location>
        <position position="174"/>
    </location>
    <ligand>
        <name>dCTP</name>
        <dbReference type="ChEBI" id="CHEBI:61481"/>
    </ligand>
</feature>
<feature type="site" description="Important for bifunctional activity" evidence="1">
    <location>
        <begin position="116"/>
        <end position="117"/>
    </location>
</feature>
<name>DCDB_MYCA1</name>
<keyword id="KW-0378">Hydrolase</keyword>
<keyword id="KW-0546">Nucleotide metabolism</keyword>
<keyword id="KW-0547">Nucleotide-binding</keyword>
<gene>
    <name evidence="1" type="primary">dcd</name>
    <name type="ordered locus">MAV_4828</name>
</gene>
<evidence type="ECO:0000255" key="1">
    <source>
        <dbReference type="HAMAP-Rule" id="MF_00146"/>
    </source>
</evidence>
<evidence type="ECO:0000256" key="2">
    <source>
        <dbReference type="SAM" id="MobiDB-lite"/>
    </source>
</evidence>
<accession>A0QM15</accession>
<reference key="1">
    <citation type="submission" date="2006-10" db="EMBL/GenBank/DDBJ databases">
        <authorList>
            <person name="Fleischmann R.D."/>
            <person name="Dodson R.J."/>
            <person name="Haft D.H."/>
            <person name="Merkel J.S."/>
            <person name="Nelson W.C."/>
            <person name="Fraser C.M."/>
        </authorList>
    </citation>
    <scope>NUCLEOTIDE SEQUENCE [LARGE SCALE GENOMIC DNA]</scope>
    <source>
        <strain>104</strain>
    </source>
</reference>
<proteinExistence type="inferred from homology"/>
<protein>
    <recommendedName>
        <fullName evidence="1">dCTP deaminase, dUMP-forming</fullName>
        <ecNumber evidence="1">3.5.4.30</ecNumber>
    </recommendedName>
    <alternativeName>
        <fullName evidence="1">Bifunctional dCTP deaminase:dUTPase</fullName>
    </alternativeName>
    <alternativeName>
        <fullName evidence="1">DCD-DUT</fullName>
    </alternativeName>
</protein>
<dbReference type="EC" id="3.5.4.30" evidence="1"/>
<dbReference type="EMBL" id="CP000479">
    <property type="protein sequence ID" value="ABK66255.1"/>
    <property type="molecule type" value="Genomic_DNA"/>
</dbReference>
<dbReference type="RefSeq" id="WP_003873894.1">
    <property type="nucleotide sequence ID" value="NC_008595.1"/>
</dbReference>
<dbReference type="SMR" id="A0QM15"/>
<dbReference type="GeneID" id="75272350"/>
<dbReference type="KEGG" id="mav:MAV_4828"/>
<dbReference type="HOGENOM" id="CLU_087476_2_1_11"/>
<dbReference type="UniPathway" id="UPA00610">
    <property type="reaction ID" value="UER00667"/>
</dbReference>
<dbReference type="Proteomes" id="UP000001574">
    <property type="component" value="Chromosome"/>
</dbReference>
<dbReference type="GO" id="GO:0033973">
    <property type="term" value="F:dCTP deaminase (dUMP-forming) activity"/>
    <property type="evidence" value="ECO:0007669"/>
    <property type="project" value="UniProtKB-UniRule"/>
</dbReference>
<dbReference type="GO" id="GO:0008829">
    <property type="term" value="F:dCTP deaminase activity"/>
    <property type="evidence" value="ECO:0007669"/>
    <property type="project" value="InterPro"/>
</dbReference>
<dbReference type="GO" id="GO:0000166">
    <property type="term" value="F:nucleotide binding"/>
    <property type="evidence" value="ECO:0007669"/>
    <property type="project" value="UniProtKB-KW"/>
</dbReference>
<dbReference type="GO" id="GO:0006226">
    <property type="term" value="P:dUMP biosynthetic process"/>
    <property type="evidence" value="ECO:0007669"/>
    <property type="project" value="UniProtKB-UniRule"/>
</dbReference>
<dbReference type="GO" id="GO:0006229">
    <property type="term" value="P:dUTP biosynthetic process"/>
    <property type="evidence" value="ECO:0007669"/>
    <property type="project" value="InterPro"/>
</dbReference>
<dbReference type="GO" id="GO:0015949">
    <property type="term" value="P:nucleobase-containing small molecule interconversion"/>
    <property type="evidence" value="ECO:0007669"/>
    <property type="project" value="TreeGrafter"/>
</dbReference>
<dbReference type="CDD" id="cd07557">
    <property type="entry name" value="trimeric_dUTPase"/>
    <property type="match status" value="1"/>
</dbReference>
<dbReference type="FunFam" id="2.70.40.10:FF:000005">
    <property type="entry name" value="dCTP deaminase, dUMP-forming"/>
    <property type="match status" value="1"/>
</dbReference>
<dbReference type="Gene3D" id="2.70.40.10">
    <property type="match status" value="1"/>
</dbReference>
<dbReference type="HAMAP" id="MF_00146">
    <property type="entry name" value="dCTP_deaminase"/>
    <property type="match status" value="1"/>
</dbReference>
<dbReference type="InterPro" id="IPR011962">
    <property type="entry name" value="dCTP_deaminase"/>
</dbReference>
<dbReference type="InterPro" id="IPR036157">
    <property type="entry name" value="dUTPase-like_sf"/>
</dbReference>
<dbReference type="InterPro" id="IPR033704">
    <property type="entry name" value="dUTPase_trimeric"/>
</dbReference>
<dbReference type="NCBIfam" id="TIGR02274">
    <property type="entry name" value="dCTP_deam"/>
    <property type="match status" value="1"/>
</dbReference>
<dbReference type="PANTHER" id="PTHR42680">
    <property type="entry name" value="DCTP DEAMINASE"/>
    <property type="match status" value="1"/>
</dbReference>
<dbReference type="PANTHER" id="PTHR42680:SF3">
    <property type="entry name" value="DCTP DEAMINASE"/>
    <property type="match status" value="1"/>
</dbReference>
<dbReference type="Pfam" id="PF22769">
    <property type="entry name" value="DCD"/>
    <property type="match status" value="1"/>
</dbReference>
<dbReference type="SUPFAM" id="SSF51283">
    <property type="entry name" value="dUTPase-like"/>
    <property type="match status" value="1"/>
</dbReference>
<comment type="function">
    <text evidence="1">Bifunctional enzyme that catalyzes both the deamination of dCTP to dUTP and the hydrolysis of dUTP to dUMP without releasing the toxic dUTP intermediate.</text>
</comment>
<comment type="catalytic activity">
    <reaction evidence="1">
        <text>dCTP + 2 H2O = dUMP + NH4(+) + diphosphate</text>
        <dbReference type="Rhea" id="RHEA:19205"/>
        <dbReference type="ChEBI" id="CHEBI:15377"/>
        <dbReference type="ChEBI" id="CHEBI:28938"/>
        <dbReference type="ChEBI" id="CHEBI:33019"/>
        <dbReference type="ChEBI" id="CHEBI:61481"/>
        <dbReference type="ChEBI" id="CHEBI:246422"/>
        <dbReference type="EC" id="3.5.4.30"/>
    </reaction>
</comment>
<comment type="pathway">
    <text evidence="1">Pyrimidine metabolism; dUMP biosynthesis; dUMP from dCTP: step 1/1.</text>
</comment>
<comment type="subunit">
    <text evidence="1">Homotrimer.</text>
</comment>
<comment type="similarity">
    <text evidence="1">Belongs to the dCTP deaminase family.</text>
</comment>
<organism>
    <name type="scientific">Mycobacterium avium (strain 104)</name>
    <dbReference type="NCBI Taxonomy" id="243243"/>
    <lineage>
        <taxon>Bacteria</taxon>
        <taxon>Bacillati</taxon>
        <taxon>Actinomycetota</taxon>
        <taxon>Actinomycetes</taxon>
        <taxon>Mycobacteriales</taxon>
        <taxon>Mycobacteriaceae</taxon>
        <taxon>Mycobacterium</taxon>
        <taxon>Mycobacterium avium complex (MAC)</taxon>
    </lineage>
</organism>